<gene>
    <name evidence="1" type="primary">chlL</name>
    <name type="synonym">frxC</name>
</gene>
<dbReference type="EC" id="1.3.7.7" evidence="1"/>
<dbReference type="EMBL" id="U30821">
    <property type="protein sequence ID" value="AAA81316.1"/>
    <property type="molecule type" value="Genomic_DNA"/>
</dbReference>
<dbReference type="PIR" id="T06973">
    <property type="entry name" value="T06973"/>
</dbReference>
<dbReference type="RefSeq" id="NP_043285.1">
    <property type="nucleotide sequence ID" value="NC_001675.1"/>
</dbReference>
<dbReference type="SMR" id="P48110"/>
<dbReference type="GeneID" id="801629"/>
<dbReference type="UniPathway" id="UPA00670"/>
<dbReference type="GO" id="GO:0009842">
    <property type="term" value="C:cyanelle"/>
    <property type="evidence" value="ECO:0007669"/>
    <property type="project" value="UniProtKB-SubCell"/>
</dbReference>
<dbReference type="GO" id="GO:0051539">
    <property type="term" value="F:4 iron, 4 sulfur cluster binding"/>
    <property type="evidence" value="ECO:0007669"/>
    <property type="project" value="UniProtKB-UniRule"/>
</dbReference>
<dbReference type="GO" id="GO:0005524">
    <property type="term" value="F:ATP binding"/>
    <property type="evidence" value="ECO:0007669"/>
    <property type="project" value="UniProtKB-UniRule"/>
</dbReference>
<dbReference type="GO" id="GO:0046872">
    <property type="term" value="F:metal ion binding"/>
    <property type="evidence" value="ECO:0007669"/>
    <property type="project" value="UniProtKB-KW"/>
</dbReference>
<dbReference type="GO" id="GO:0016730">
    <property type="term" value="F:oxidoreductase activity, acting on iron-sulfur proteins as donors"/>
    <property type="evidence" value="ECO:0007669"/>
    <property type="project" value="InterPro"/>
</dbReference>
<dbReference type="GO" id="GO:0016636">
    <property type="term" value="F:oxidoreductase activity, acting on the CH-CH group of donors, iron-sulfur protein as acceptor"/>
    <property type="evidence" value="ECO:0007669"/>
    <property type="project" value="UniProtKB-UniRule"/>
</dbReference>
<dbReference type="GO" id="GO:0036068">
    <property type="term" value="P:light-independent chlorophyll biosynthetic process"/>
    <property type="evidence" value="ECO:0007669"/>
    <property type="project" value="UniProtKB-UniPathway"/>
</dbReference>
<dbReference type="GO" id="GO:0019685">
    <property type="term" value="P:photosynthesis, dark reaction"/>
    <property type="evidence" value="ECO:0007669"/>
    <property type="project" value="InterPro"/>
</dbReference>
<dbReference type="CDD" id="cd02032">
    <property type="entry name" value="Bchl-like"/>
    <property type="match status" value="1"/>
</dbReference>
<dbReference type="Gene3D" id="3.40.50.300">
    <property type="entry name" value="P-loop containing nucleotide triphosphate hydrolases"/>
    <property type="match status" value="1"/>
</dbReference>
<dbReference type="HAMAP" id="MF_00355">
    <property type="entry name" value="ChlL_BchL"/>
    <property type="match status" value="1"/>
</dbReference>
<dbReference type="InterPro" id="IPR030655">
    <property type="entry name" value="NifH/chlL_CS"/>
</dbReference>
<dbReference type="InterPro" id="IPR000392">
    <property type="entry name" value="NifH/frxC"/>
</dbReference>
<dbReference type="InterPro" id="IPR027417">
    <property type="entry name" value="P-loop_NTPase"/>
</dbReference>
<dbReference type="InterPro" id="IPR005971">
    <property type="entry name" value="Protochlorophyllide_ATP-bd"/>
</dbReference>
<dbReference type="NCBIfam" id="TIGR01281">
    <property type="entry name" value="DPOR_bchL"/>
    <property type="match status" value="1"/>
</dbReference>
<dbReference type="PANTHER" id="PTHR42864">
    <property type="entry name" value="LIGHT-INDEPENDENT PROTOCHLOROPHYLLIDE REDUCTASE IRON-SULFUR ATP-BINDING PROTEIN"/>
    <property type="match status" value="1"/>
</dbReference>
<dbReference type="PANTHER" id="PTHR42864:SF2">
    <property type="entry name" value="LIGHT-INDEPENDENT PROTOCHLOROPHYLLIDE REDUCTASE IRON-SULFUR ATP-BINDING PROTEIN"/>
    <property type="match status" value="1"/>
</dbReference>
<dbReference type="Pfam" id="PF00142">
    <property type="entry name" value="Fer4_NifH"/>
    <property type="match status" value="1"/>
</dbReference>
<dbReference type="PIRSF" id="PIRSF000363">
    <property type="entry name" value="Nitrogenase_iron"/>
    <property type="match status" value="1"/>
</dbReference>
<dbReference type="PRINTS" id="PR00091">
    <property type="entry name" value="NITROGNASEII"/>
</dbReference>
<dbReference type="SUPFAM" id="SSF52540">
    <property type="entry name" value="P-loop containing nucleoside triphosphate hydrolases"/>
    <property type="match status" value="1"/>
</dbReference>
<dbReference type="PROSITE" id="PS00746">
    <property type="entry name" value="NIFH_FRXC_1"/>
    <property type="match status" value="1"/>
</dbReference>
<dbReference type="PROSITE" id="PS00692">
    <property type="entry name" value="NIFH_FRXC_2"/>
    <property type="match status" value="1"/>
</dbReference>
<dbReference type="PROSITE" id="PS51026">
    <property type="entry name" value="NIFH_FRXC_3"/>
    <property type="match status" value="1"/>
</dbReference>
<keyword id="KW-0004">4Fe-4S</keyword>
<keyword id="KW-0067">ATP-binding</keyword>
<keyword id="KW-0077">Bacteriochlorophyll biosynthesis</keyword>
<keyword id="KW-0149">Chlorophyll biosynthesis</keyword>
<keyword id="KW-0194">Cyanelle</keyword>
<keyword id="KW-0408">Iron</keyword>
<keyword id="KW-0411">Iron-sulfur</keyword>
<keyword id="KW-0460">Magnesium</keyword>
<keyword id="KW-0479">Metal-binding</keyword>
<keyword id="KW-0547">Nucleotide-binding</keyword>
<keyword id="KW-0560">Oxidoreductase</keyword>
<keyword id="KW-0602">Photosynthesis</keyword>
<keyword id="KW-0934">Plastid</keyword>
<sequence length="282" mass="30847">MKLAVYGKGGIGKSTTSCNISVALAKRGKKVLQIGCDPKHDSTFTLTGHLIPTIIDTLQEKDFHYEDIWPEDVIYKGYAGVDCVEAGGPPAGAGCGGYVVGETVKLLKELNAFDEYDIILFDVLGDVVCGGFASPLNYADYCLIVTDNGFDALFAANRIAASVREKARTHQLRLAGLIGNRTTKSDLIEKYTENVPIPILQLLPLIEDIRISRVKGKTLFEMSESNPELSPICDYYLNIADQILAKPEGIIPNEVLDRDLFTLLSDFYLNMDSSESSNLTLV</sequence>
<proteinExistence type="inferred from homology"/>
<geneLocation type="cyanelle"/>
<feature type="chain" id="PRO_0000139556" description="Light-independent protochlorophyllide reductase iron-sulfur ATP-binding protein">
    <location>
        <begin position="1"/>
        <end position="282"/>
    </location>
</feature>
<feature type="binding site" evidence="1">
    <location>
        <begin position="10"/>
        <end position="15"/>
    </location>
    <ligand>
        <name>ATP</name>
        <dbReference type="ChEBI" id="CHEBI:30616"/>
    </ligand>
</feature>
<feature type="binding site" evidence="1">
    <location>
        <position position="14"/>
    </location>
    <ligand>
        <name>Mg(2+)</name>
        <dbReference type="ChEBI" id="CHEBI:18420"/>
    </ligand>
</feature>
<feature type="binding site" evidence="1">
    <location>
        <position position="39"/>
    </location>
    <ligand>
        <name>ATP</name>
        <dbReference type="ChEBI" id="CHEBI:30616"/>
    </ligand>
</feature>
<feature type="binding site" evidence="1">
    <location>
        <position position="95"/>
    </location>
    <ligand>
        <name>[4Fe-4S] cluster</name>
        <dbReference type="ChEBI" id="CHEBI:49883"/>
        <note>ligand shared between dimeric partners</note>
    </ligand>
</feature>
<feature type="binding site" evidence="1">
    <location>
        <position position="129"/>
    </location>
    <ligand>
        <name>[4Fe-4S] cluster</name>
        <dbReference type="ChEBI" id="CHEBI:49883"/>
        <note>ligand shared between dimeric partners</note>
    </ligand>
</feature>
<feature type="binding site" evidence="1">
    <location>
        <begin position="180"/>
        <end position="181"/>
    </location>
    <ligand>
        <name>ATP</name>
        <dbReference type="ChEBI" id="CHEBI:30616"/>
    </ligand>
</feature>
<comment type="function">
    <text evidence="1">Component of the dark-operative protochlorophyllide reductase (DPOR) that uses Mg-ATP and reduced ferredoxin to reduce ring D of protochlorophyllide (Pchlide) to form chlorophyllide a (Chlide). This reaction is light-independent. The L component serves as a unique electron donor to the NB-component of the complex, and binds Mg-ATP.</text>
</comment>
<comment type="catalytic activity">
    <reaction evidence="1">
        <text>chlorophyllide a + oxidized 2[4Fe-4S]-[ferredoxin] + 2 ADP + 2 phosphate = protochlorophyllide a + reduced 2[4Fe-4S]-[ferredoxin] + 2 ATP + 2 H2O</text>
        <dbReference type="Rhea" id="RHEA:28202"/>
        <dbReference type="Rhea" id="RHEA-COMP:10002"/>
        <dbReference type="Rhea" id="RHEA-COMP:10004"/>
        <dbReference type="ChEBI" id="CHEBI:15377"/>
        <dbReference type="ChEBI" id="CHEBI:30616"/>
        <dbReference type="ChEBI" id="CHEBI:33722"/>
        <dbReference type="ChEBI" id="CHEBI:33723"/>
        <dbReference type="ChEBI" id="CHEBI:43474"/>
        <dbReference type="ChEBI" id="CHEBI:83348"/>
        <dbReference type="ChEBI" id="CHEBI:83350"/>
        <dbReference type="ChEBI" id="CHEBI:456216"/>
        <dbReference type="EC" id="1.3.7.7"/>
    </reaction>
</comment>
<comment type="cofactor">
    <cofactor evidence="1">
        <name>[4Fe-4S] cluster</name>
        <dbReference type="ChEBI" id="CHEBI:49883"/>
    </cofactor>
    <text evidence="1">Binds 1 [4Fe-4S] cluster per dimer.</text>
</comment>
<comment type="pathway">
    <text evidence="1">Porphyrin-containing compound metabolism; chlorophyll biosynthesis (light-independent).</text>
</comment>
<comment type="subunit">
    <text evidence="1">Homodimer. Protochlorophyllide reductase is composed of three subunits; ChlL, ChlN and ChlB.</text>
</comment>
<comment type="subcellular location">
    <subcellularLocation>
        <location>Plastid</location>
        <location>Cyanelle</location>
    </subcellularLocation>
</comment>
<comment type="similarity">
    <text evidence="1">Belongs to the NifH/BchL/ChlL family.</text>
</comment>
<evidence type="ECO:0000255" key="1">
    <source>
        <dbReference type="HAMAP-Rule" id="MF_00355"/>
    </source>
</evidence>
<protein>
    <recommendedName>
        <fullName evidence="1">Light-independent protochlorophyllide reductase iron-sulfur ATP-binding protein</fullName>
        <shortName evidence="1">DPOR subunit L</shortName>
        <shortName evidence="1">LI-POR subunit L</shortName>
        <ecNumber evidence="1">1.3.7.7</ecNumber>
    </recommendedName>
</protein>
<accession>P48110</accession>
<organism>
    <name type="scientific">Cyanophora paradoxa</name>
    <dbReference type="NCBI Taxonomy" id="2762"/>
    <lineage>
        <taxon>Eukaryota</taxon>
        <taxon>Glaucocystophyceae</taxon>
        <taxon>Cyanophoraceae</taxon>
        <taxon>Cyanophora</taxon>
    </lineage>
</organism>
<reference key="1">
    <citation type="journal article" date="1995" name="Plant Mol. Biol. Rep.">
        <title>Nucleotide sequence of the cyanelle DNA from Cyanophora paradoxa.</title>
        <authorList>
            <person name="Stirewalt V.L."/>
            <person name="Michalowski C.B."/>
            <person name="Loeffelhardt W."/>
            <person name="Bohnert H.J."/>
            <person name="Bryant D.A."/>
        </authorList>
    </citation>
    <scope>NUCLEOTIDE SEQUENCE [LARGE SCALE GENOMIC DNA]</scope>
    <source>
        <strain>UTEX LB 555 / Pringsheim</strain>
    </source>
</reference>
<reference key="2">
    <citation type="book" date="1997" name="Eukaryotism and symbiosis">
        <title>The complete sequence of the cyanelle genome of Cyanophora paradoxa: the genetic complexity of a primitive plastid.</title>
        <editorList>
            <person name="Schenk H.E.A."/>
            <person name="Herrmann R."/>
            <person name="Jeon K.W."/>
            <person name="Mueller N.E."/>
            <person name="Schwemmler W."/>
        </editorList>
        <authorList>
            <person name="Loeffelhardt W."/>
            <person name="Stirewalt V.L."/>
            <person name="Michalowski C.B."/>
            <person name="Annarella M."/>
            <person name="Farley J.Y."/>
            <person name="Schluchter W.M."/>
            <person name="Chung S."/>
            <person name="Newmann-Spallart C."/>
            <person name="Steiner J.M."/>
            <person name="Jakowitsch J."/>
            <person name="Bohnert H.J."/>
            <person name="Bryant D.A."/>
        </authorList>
    </citation>
    <scope>NUCLEOTIDE SEQUENCE [LARGE SCALE GENOMIC DNA]</scope>
    <source>
        <strain>UTEX LB 555 / Pringsheim</strain>
    </source>
</reference>
<name>CHLL_CYAPA</name>